<sequence>MFSFYFNDNKITKLLMVGYGSTGKSVCDFLANFIDITVDISQNDDEFVNYDLNSYDLITVSPGIPLNKSPYRALTKFKDKIVSDIDIFYQYIKDTKAKTIAVTGSNGKSTVVTMTDFVLKDLGYKSILVGNIGTPALNKIGEKFDYCVVEVSSFQINLFNCVRFDLGCIINVSPDHLDRYQNFEQYKQSKLNLAKFSNDFFVYDVHNGIKYAGEYQIIRGAIYRNSTKLLDIVETKLFGEHNLENIIVVLNILDRLGLDINQAIDSIKKFKGLEHRCKIIKKVNGTTYINDSKGTNVGATIAALNSITNSKNIILLLGGVAKGGDFSLMIKSLDKYVKYVYIYGVDKEYIESYIKGYCKYQLCNNMKQAFELASQKANSNEIVLLSPACASFDEFSGYAQRGEVFQNLVAQLEQKS</sequence>
<keyword id="KW-0067">ATP-binding</keyword>
<keyword id="KW-0131">Cell cycle</keyword>
<keyword id="KW-0132">Cell division</keyword>
<keyword id="KW-0133">Cell shape</keyword>
<keyword id="KW-0961">Cell wall biogenesis/degradation</keyword>
<keyword id="KW-0963">Cytoplasm</keyword>
<keyword id="KW-0436">Ligase</keyword>
<keyword id="KW-0547">Nucleotide-binding</keyword>
<keyword id="KW-0573">Peptidoglycan synthesis</keyword>
<proteinExistence type="inferred from homology"/>
<feature type="chain" id="PRO_1000130856" description="UDP-N-acetylmuramoylalanine--D-glutamate ligase">
    <location>
        <begin position="1"/>
        <end position="416"/>
    </location>
</feature>
<feature type="binding site" evidence="1">
    <location>
        <begin position="104"/>
        <end position="110"/>
    </location>
    <ligand>
        <name>ATP</name>
        <dbReference type="ChEBI" id="CHEBI:30616"/>
    </ligand>
</feature>
<protein>
    <recommendedName>
        <fullName evidence="1">UDP-N-acetylmuramoylalanine--D-glutamate ligase</fullName>
        <ecNumber evidence="1">6.3.2.9</ecNumber>
    </recommendedName>
    <alternativeName>
        <fullName evidence="1">D-glutamic acid-adding enzyme</fullName>
    </alternativeName>
    <alternativeName>
        <fullName evidence="1">UDP-N-acetylmuramoyl-L-alanyl-D-glutamate synthetase</fullName>
    </alternativeName>
</protein>
<evidence type="ECO:0000255" key="1">
    <source>
        <dbReference type="HAMAP-Rule" id="MF_00639"/>
    </source>
</evidence>
<reference key="1">
    <citation type="journal article" date="2009" name="PLoS Pathog.">
        <title>Molecular evolutionary consequences of niche restriction in Francisella tularensis, a facultative intracellular pathogen.</title>
        <authorList>
            <person name="Larsson P."/>
            <person name="Elfsmark D."/>
            <person name="Svensson K."/>
            <person name="Wikstroem P."/>
            <person name="Forsman M."/>
            <person name="Brettin T."/>
            <person name="Keim P."/>
            <person name="Johansson A."/>
        </authorList>
    </citation>
    <scope>NUCLEOTIDE SEQUENCE [LARGE SCALE GENOMIC DNA]</scope>
    <source>
        <strain>FSC147</strain>
    </source>
</reference>
<organism>
    <name type="scientific">Francisella tularensis subsp. mediasiatica (strain FSC147)</name>
    <dbReference type="NCBI Taxonomy" id="441952"/>
    <lineage>
        <taxon>Bacteria</taxon>
        <taxon>Pseudomonadati</taxon>
        <taxon>Pseudomonadota</taxon>
        <taxon>Gammaproteobacteria</taxon>
        <taxon>Thiotrichales</taxon>
        <taxon>Francisellaceae</taxon>
        <taxon>Francisella</taxon>
    </lineage>
</organism>
<accession>B2SDR8</accession>
<comment type="function">
    <text evidence="1">Cell wall formation. Catalyzes the addition of glutamate to the nucleotide precursor UDP-N-acetylmuramoyl-L-alanine (UMA).</text>
</comment>
<comment type="catalytic activity">
    <reaction evidence="1">
        <text>UDP-N-acetyl-alpha-D-muramoyl-L-alanine + D-glutamate + ATP = UDP-N-acetyl-alpha-D-muramoyl-L-alanyl-D-glutamate + ADP + phosphate + H(+)</text>
        <dbReference type="Rhea" id="RHEA:16429"/>
        <dbReference type="ChEBI" id="CHEBI:15378"/>
        <dbReference type="ChEBI" id="CHEBI:29986"/>
        <dbReference type="ChEBI" id="CHEBI:30616"/>
        <dbReference type="ChEBI" id="CHEBI:43474"/>
        <dbReference type="ChEBI" id="CHEBI:83898"/>
        <dbReference type="ChEBI" id="CHEBI:83900"/>
        <dbReference type="ChEBI" id="CHEBI:456216"/>
        <dbReference type="EC" id="6.3.2.9"/>
    </reaction>
</comment>
<comment type="pathway">
    <text evidence="1">Cell wall biogenesis; peptidoglycan biosynthesis.</text>
</comment>
<comment type="subcellular location">
    <subcellularLocation>
        <location evidence="1">Cytoplasm</location>
    </subcellularLocation>
</comment>
<comment type="similarity">
    <text evidence="1">Belongs to the MurCDEF family.</text>
</comment>
<gene>
    <name evidence="1" type="primary">murD</name>
    <name type="ordered locus">FTM_1452</name>
</gene>
<name>MURD_FRATM</name>
<dbReference type="EC" id="6.3.2.9" evidence="1"/>
<dbReference type="EMBL" id="CP000915">
    <property type="protein sequence ID" value="ACD31282.1"/>
    <property type="molecule type" value="Genomic_DNA"/>
</dbReference>
<dbReference type="SMR" id="B2SDR8"/>
<dbReference type="KEGG" id="ftm:FTM_1452"/>
<dbReference type="HOGENOM" id="CLU_032540_1_0_6"/>
<dbReference type="UniPathway" id="UPA00219"/>
<dbReference type="GO" id="GO:0005737">
    <property type="term" value="C:cytoplasm"/>
    <property type="evidence" value="ECO:0007669"/>
    <property type="project" value="UniProtKB-SubCell"/>
</dbReference>
<dbReference type="GO" id="GO:0005524">
    <property type="term" value="F:ATP binding"/>
    <property type="evidence" value="ECO:0007669"/>
    <property type="project" value="UniProtKB-UniRule"/>
</dbReference>
<dbReference type="GO" id="GO:0008764">
    <property type="term" value="F:UDP-N-acetylmuramoylalanine-D-glutamate ligase activity"/>
    <property type="evidence" value="ECO:0007669"/>
    <property type="project" value="UniProtKB-UniRule"/>
</dbReference>
<dbReference type="GO" id="GO:0051301">
    <property type="term" value="P:cell division"/>
    <property type="evidence" value="ECO:0007669"/>
    <property type="project" value="UniProtKB-KW"/>
</dbReference>
<dbReference type="GO" id="GO:0071555">
    <property type="term" value="P:cell wall organization"/>
    <property type="evidence" value="ECO:0007669"/>
    <property type="project" value="UniProtKB-KW"/>
</dbReference>
<dbReference type="GO" id="GO:0009252">
    <property type="term" value="P:peptidoglycan biosynthetic process"/>
    <property type="evidence" value="ECO:0007669"/>
    <property type="project" value="UniProtKB-UniRule"/>
</dbReference>
<dbReference type="GO" id="GO:0008360">
    <property type="term" value="P:regulation of cell shape"/>
    <property type="evidence" value="ECO:0007669"/>
    <property type="project" value="UniProtKB-KW"/>
</dbReference>
<dbReference type="Gene3D" id="3.90.190.20">
    <property type="entry name" value="Mur ligase, C-terminal domain"/>
    <property type="match status" value="1"/>
</dbReference>
<dbReference type="Gene3D" id="3.40.1190.10">
    <property type="entry name" value="Mur-like, catalytic domain"/>
    <property type="match status" value="1"/>
</dbReference>
<dbReference type="HAMAP" id="MF_00639">
    <property type="entry name" value="MurD"/>
    <property type="match status" value="1"/>
</dbReference>
<dbReference type="InterPro" id="IPR036565">
    <property type="entry name" value="Mur-like_cat_sf"/>
</dbReference>
<dbReference type="InterPro" id="IPR004101">
    <property type="entry name" value="Mur_ligase_C"/>
</dbReference>
<dbReference type="InterPro" id="IPR036615">
    <property type="entry name" value="Mur_ligase_C_dom_sf"/>
</dbReference>
<dbReference type="InterPro" id="IPR013221">
    <property type="entry name" value="Mur_ligase_cen"/>
</dbReference>
<dbReference type="InterPro" id="IPR005762">
    <property type="entry name" value="MurD"/>
</dbReference>
<dbReference type="NCBIfam" id="TIGR01087">
    <property type="entry name" value="murD"/>
    <property type="match status" value="1"/>
</dbReference>
<dbReference type="PANTHER" id="PTHR43692">
    <property type="entry name" value="UDP-N-ACETYLMURAMOYLALANINE--D-GLUTAMATE LIGASE"/>
    <property type="match status" value="1"/>
</dbReference>
<dbReference type="PANTHER" id="PTHR43692:SF1">
    <property type="entry name" value="UDP-N-ACETYLMURAMOYLALANINE--D-GLUTAMATE LIGASE"/>
    <property type="match status" value="1"/>
</dbReference>
<dbReference type="Pfam" id="PF02875">
    <property type="entry name" value="Mur_ligase_C"/>
    <property type="match status" value="1"/>
</dbReference>
<dbReference type="Pfam" id="PF08245">
    <property type="entry name" value="Mur_ligase_M"/>
    <property type="match status" value="1"/>
</dbReference>
<dbReference type="SUPFAM" id="SSF53623">
    <property type="entry name" value="MurD-like peptide ligases, catalytic domain"/>
    <property type="match status" value="1"/>
</dbReference>
<dbReference type="SUPFAM" id="SSF53244">
    <property type="entry name" value="MurD-like peptide ligases, peptide-binding domain"/>
    <property type="match status" value="1"/>
</dbReference>